<reference key="1">
    <citation type="submission" date="2005-08" db="EMBL/GenBank/DDBJ databases">
        <title>Complete sequence of chromosome 1 of Synechococcus elongatus PCC 7942.</title>
        <authorList>
            <consortium name="US DOE Joint Genome Institute"/>
            <person name="Copeland A."/>
            <person name="Lucas S."/>
            <person name="Lapidus A."/>
            <person name="Barry K."/>
            <person name="Detter J.C."/>
            <person name="Glavina T."/>
            <person name="Hammon N."/>
            <person name="Israni S."/>
            <person name="Pitluck S."/>
            <person name="Schmutz J."/>
            <person name="Larimer F."/>
            <person name="Land M."/>
            <person name="Kyrpides N."/>
            <person name="Lykidis A."/>
            <person name="Golden S."/>
            <person name="Richardson P."/>
        </authorList>
    </citation>
    <scope>NUCLEOTIDE SEQUENCE [LARGE SCALE GENOMIC DNA]</scope>
    <source>
        <strain>ATCC 33912 / PCC 7942 / FACHB-805</strain>
    </source>
</reference>
<organism>
    <name type="scientific">Synechococcus elongatus (strain ATCC 33912 / PCC 7942 / FACHB-805)</name>
    <name type="common">Anacystis nidulans R2</name>
    <dbReference type="NCBI Taxonomy" id="1140"/>
    <lineage>
        <taxon>Bacteria</taxon>
        <taxon>Bacillati</taxon>
        <taxon>Cyanobacteriota</taxon>
        <taxon>Cyanophyceae</taxon>
        <taxon>Synechococcales</taxon>
        <taxon>Synechococcaceae</taxon>
        <taxon>Synechococcus</taxon>
    </lineage>
</organism>
<accession>Q31QX6</accession>
<name>CCSA_SYNE7</name>
<comment type="function">
    <text evidence="2">Required during biogenesis of c-type cytochromes (cytochrome c6 and cytochrome f) at the step of heme attachment.</text>
</comment>
<comment type="subunit">
    <text evidence="1">May interact with ccs1.</text>
</comment>
<comment type="subcellular location">
    <subcellularLocation>
        <location evidence="2">Cellular thylakoid membrane</location>
        <topology evidence="2">Multi-pass membrane protein</topology>
    </subcellularLocation>
</comment>
<comment type="similarity">
    <text evidence="2">Belongs to the CcmF/CycK/Ccl1/NrfE/CcsA family.</text>
</comment>
<feature type="chain" id="PRO_0000353713" description="Cytochrome c biogenesis protein CcsA">
    <location>
        <begin position="1"/>
        <end position="325"/>
    </location>
</feature>
<feature type="transmembrane region" description="Helical" evidence="2">
    <location>
        <begin position="14"/>
        <end position="34"/>
    </location>
</feature>
<feature type="transmembrane region" description="Helical" evidence="2">
    <location>
        <begin position="36"/>
        <end position="56"/>
    </location>
</feature>
<feature type="transmembrane region" description="Helical" evidence="2">
    <location>
        <begin position="68"/>
        <end position="88"/>
    </location>
</feature>
<feature type="transmembrane region" description="Helical" evidence="2">
    <location>
        <begin position="97"/>
        <end position="117"/>
    </location>
</feature>
<feature type="transmembrane region" description="Helical" evidence="2">
    <location>
        <begin position="142"/>
        <end position="162"/>
    </location>
</feature>
<feature type="transmembrane region" description="Helical" evidence="2">
    <location>
        <begin position="233"/>
        <end position="253"/>
    </location>
</feature>
<feature type="transmembrane region" description="Helical" evidence="2">
    <location>
        <begin position="260"/>
        <end position="280"/>
    </location>
</feature>
<feature type="transmembrane region" description="Helical" evidence="2">
    <location>
        <begin position="294"/>
        <end position="314"/>
    </location>
</feature>
<evidence type="ECO:0000250" key="1"/>
<evidence type="ECO:0000255" key="2">
    <source>
        <dbReference type="HAMAP-Rule" id="MF_01391"/>
    </source>
</evidence>
<proteinExistence type="inferred from homology"/>
<dbReference type="EMBL" id="CP000100">
    <property type="protein sequence ID" value="ABB56543.1"/>
    <property type="molecule type" value="Genomic_DNA"/>
</dbReference>
<dbReference type="SMR" id="Q31QX6"/>
<dbReference type="STRING" id="1140.Synpcc7942_0511"/>
<dbReference type="PaxDb" id="1140-Synpcc7942_0511"/>
<dbReference type="KEGG" id="syf:Synpcc7942_0511"/>
<dbReference type="eggNOG" id="COG0755">
    <property type="taxonomic scope" value="Bacteria"/>
</dbReference>
<dbReference type="HOGENOM" id="CLU_049710_2_4_3"/>
<dbReference type="OrthoDB" id="9814290at2"/>
<dbReference type="BioCyc" id="SYNEL:SYNPCC7942_0511-MONOMER"/>
<dbReference type="Proteomes" id="UP000889800">
    <property type="component" value="Chromosome"/>
</dbReference>
<dbReference type="GO" id="GO:0031676">
    <property type="term" value="C:plasma membrane-derived thylakoid membrane"/>
    <property type="evidence" value="ECO:0007669"/>
    <property type="project" value="UniProtKB-SubCell"/>
</dbReference>
<dbReference type="GO" id="GO:0020037">
    <property type="term" value="F:heme binding"/>
    <property type="evidence" value="ECO:0007669"/>
    <property type="project" value="InterPro"/>
</dbReference>
<dbReference type="GO" id="GO:0017004">
    <property type="term" value="P:cytochrome complex assembly"/>
    <property type="evidence" value="ECO:0007669"/>
    <property type="project" value="UniProtKB-UniRule"/>
</dbReference>
<dbReference type="HAMAP" id="MF_01391">
    <property type="entry name" value="CytC_CcsA"/>
    <property type="match status" value="1"/>
</dbReference>
<dbReference type="InterPro" id="IPR002541">
    <property type="entry name" value="Cyt_c_assembly"/>
</dbReference>
<dbReference type="InterPro" id="IPR017562">
    <property type="entry name" value="Cyt_c_biogenesis_CcsA"/>
</dbReference>
<dbReference type="InterPro" id="IPR045062">
    <property type="entry name" value="Cyt_c_biogenesis_CcsA/CcmC"/>
</dbReference>
<dbReference type="NCBIfam" id="TIGR03144">
    <property type="entry name" value="cytochr_II_ccsB"/>
    <property type="match status" value="1"/>
</dbReference>
<dbReference type="PANTHER" id="PTHR30071:SF1">
    <property type="entry name" value="CYTOCHROME B_B6 PROTEIN-RELATED"/>
    <property type="match status" value="1"/>
</dbReference>
<dbReference type="PANTHER" id="PTHR30071">
    <property type="entry name" value="HEME EXPORTER PROTEIN C"/>
    <property type="match status" value="1"/>
</dbReference>
<dbReference type="Pfam" id="PF01578">
    <property type="entry name" value="Cytochrom_C_asm"/>
    <property type="match status" value="1"/>
</dbReference>
<gene>
    <name evidence="2" type="primary">ccsA</name>
    <name type="ordered locus">Synpcc7942_0511</name>
</gene>
<sequence>MNLVSLQNSLDNATFAILLPTLLCYWTGVAFPNLKGLPAIGTAGMAIANLCMAALLGARWLEAGYFPISNLYESLFFLAWGLTAIHLLAEKLSGSRLVGAATSPLALGIVAFAAFTLPKEMRQAEPLVPALKSNWLMMHVSVMMVSYAALLVGSLLSVAFLVVTRGQAIELRGSSVGTGSFRQVKLNRASDLTIATAESGGSGGTAVLEQPVLQLAPEQLSLADTLDNVSYRVIGLGFPLLTIGIIAGAVWANEAWGSYWSWDPKETWALITWLVFAAYLHARITRGWQGRRPAILATVGFGVVWVCYLGVNLLGKGLHSYGWFF</sequence>
<keyword id="KW-0201">Cytochrome c-type biogenesis</keyword>
<keyword id="KW-0472">Membrane</keyword>
<keyword id="KW-1185">Reference proteome</keyword>
<keyword id="KW-0793">Thylakoid</keyword>
<keyword id="KW-0812">Transmembrane</keyword>
<keyword id="KW-1133">Transmembrane helix</keyword>
<protein>
    <recommendedName>
        <fullName evidence="2">Cytochrome c biogenesis protein CcsA</fullName>
    </recommendedName>
</protein>